<proteinExistence type="evidence at protein level"/>
<evidence type="ECO:0000255" key="1">
    <source>
        <dbReference type="PROSITE-ProRule" id="PRU01278"/>
    </source>
</evidence>
<evidence type="ECO:0000269" key="2">
    <source>
    </source>
</evidence>
<evidence type="ECO:0000269" key="3">
    <source>
    </source>
</evidence>
<evidence type="ECO:0000269" key="4">
    <source>
    </source>
</evidence>
<evidence type="ECO:0000269" key="5">
    <source>
    </source>
</evidence>
<evidence type="ECO:0000269" key="6">
    <source>
    </source>
</evidence>
<evidence type="ECO:0000269" key="7">
    <source>
    </source>
</evidence>
<evidence type="ECO:0000269" key="8">
    <source>
    </source>
</evidence>
<evidence type="ECO:0000269" key="9">
    <source>
    </source>
</evidence>
<evidence type="ECO:0000269" key="10">
    <source>
    </source>
</evidence>
<evidence type="ECO:0000269" key="11">
    <source>
    </source>
</evidence>
<evidence type="ECO:0000303" key="12">
    <source>
    </source>
</evidence>
<evidence type="ECO:0000303" key="13">
    <source>
    </source>
</evidence>
<evidence type="ECO:0000303" key="14">
    <source>
    </source>
</evidence>
<evidence type="ECO:0000305" key="15"/>
<evidence type="ECO:0000305" key="16">
    <source>
    </source>
</evidence>
<evidence type="ECO:0000305" key="17">
    <source>
    </source>
</evidence>
<evidence type="ECO:0000305" key="18">
    <source>
    </source>
</evidence>
<evidence type="ECO:0007744" key="19">
    <source>
        <dbReference type="PDB" id="5D6V"/>
    </source>
</evidence>
<evidence type="ECO:0007829" key="20">
    <source>
        <dbReference type="PDB" id="5D6V"/>
    </source>
</evidence>
<dbReference type="EMBL" id="AF026270">
    <property type="protein sequence ID" value="AAD39009.1"/>
    <property type="molecule type" value="Genomic_DNA"/>
</dbReference>
<dbReference type="EMBL" id="AE006468">
    <property type="protein sequence ID" value="AAL20949.1"/>
    <property type="molecule type" value="Genomic_DNA"/>
</dbReference>
<dbReference type="RefSeq" id="NP_460990.1">
    <property type="nucleotide sequence ID" value="NC_003197.2"/>
</dbReference>
<dbReference type="RefSeq" id="WP_001057755.1">
    <property type="nucleotide sequence ID" value="NC_003197.2"/>
</dbReference>
<dbReference type="PDB" id="5D6V">
    <property type="method" value="X-ray"/>
    <property type="resolution" value="1.50 A"/>
    <property type="chains" value="A=2-91"/>
</dbReference>
<dbReference type="PDBsum" id="5D6V"/>
<dbReference type="SMR" id="H9L478"/>
<dbReference type="STRING" id="99287.STM2045"/>
<dbReference type="PaxDb" id="99287-STM2045"/>
<dbReference type="GeneID" id="1253566"/>
<dbReference type="GeneID" id="97393748"/>
<dbReference type="KEGG" id="stm:STM2045"/>
<dbReference type="PATRIC" id="fig|99287.12.peg.2167"/>
<dbReference type="HOGENOM" id="CLU_064903_5_3_6"/>
<dbReference type="OMA" id="ESWVIIP"/>
<dbReference type="PhylomeDB" id="H9L478"/>
<dbReference type="BioCyc" id="SENT99287:STM2045-MONOMER"/>
<dbReference type="UniPathway" id="UPA00621"/>
<dbReference type="Proteomes" id="UP000001014">
    <property type="component" value="Chromosome"/>
</dbReference>
<dbReference type="GO" id="GO:0031472">
    <property type="term" value="C:propanediol degradation polyhedral organelle"/>
    <property type="evidence" value="ECO:0000314"/>
    <property type="project" value="UniProtKB"/>
</dbReference>
<dbReference type="GO" id="GO:0051144">
    <property type="term" value="P:propanediol catabolic process"/>
    <property type="evidence" value="ECO:0007669"/>
    <property type="project" value="UniProtKB-UniPathway"/>
</dbReference>
<dbReference type="CDD" id="cd07045">
    <property type="entry name" value="BMC_CcmK_like"/>
    <property type="match status" value="1"/>
</dbReference>
<dbReference type="Gene3D" id="3.30.70.1710">
    <property type="match status" value="1"/>
</dbReference>
<dbReference type="InterPro" id="IPR020808">
    <property type="entry name" value="Bact_microcomp_CS"/>
</dbReference>
<dbReference type="InterPro" id="IPR000249">
    <property type="entry name" value="BMC_dom"/>
</dbReference>
<dbReference type="InterPro" id="IPR050575">
    <property type="entry name" value="BMC_shell"/>
</dbReference>
<dbReference type="InterPro" id="IPR037233">
    <property type="entry name" value="CcmK-like_sf"/>
</dbReference>
<dbReference type="InterPro" id="IPR044872">
    <property type="entry name" value="CcmK/CsoS1_BMC"/>
</dbReference>
<dbReference type="PANTHER" id="PTHR33941:SF11">
    <property type="entry name" value="BACTERIAL MICROCOMPARTMENT SHELL PROTEIN PDUJ"/>
    <property type="match status" value="1"/>
</dbReference>
<dbReference type="PANTHER" id="PTHR33941">
    <property type="entry name" value="PROPANEDIOL UTILIZATION PROTEIN PDUA"/>
    <property type="match status" value="1"/>
</dbReference>
<dbReference type="Pfam" id="PF00936">
    <property type="entry name" value="BMC"/>
    <property type="match status" value="1"/>
</dbReference>
<dbReference type="SMART" id="SM00877">
    <property type="entry name" value="BMC"/>
    <property type="match status" value="1"/>
</dbReference>
<dbReference type="SUPFAM" id="SSF143414">
    <property type="entry name" value="CcmK-like"/>
    <property type="match status" value="1"/>
</dbReference>
<dbReference type="PROSITE" id="PS01139">
    <property type="entry name" value="BMC_1"/>
    <property type="match status" value="1"/>
</dbReference>
<dbReference type="PROSITE" id="PS51930">
    <property type="entry name" value="BMC_2"/>
    <property type="match status" value="1"/>
</dbReference>
<organism>
    <name type="scientific">Salmonella typhimurium (strain LT2 / SGSC1412 / ATCC 700720)</name>
    <dbReference type="NCBI Taxonomy" id="99287"/>
    <lineage>
        <taxon>Bacteria</taxon>
        <taxon>Pseudomonadati</taxon>
        <taxon>Pseudomonadota</taxon>
        <taxon>Gammaproteobacteria</taxon>
        <taxon>Enterobacterales</taxon>
        <taxon>Enterobacteriaceae</taxon>
        <taxon>Salmonella</taxon>
    </lineage>
</organism>
<gene>
    <name evidence="12" type="primary">pduJ</name>
    <name type="ordered locus">STM2045</name>
</gene>
<sequence length="91" mass="9068">MNNALGLVETKGLVGAIEAADAMVKSANVQLVGYEKIGSGLVTVMVRGDVGAVKAAVDAGSAAASVVGEVKSCHVIPRPHSDVEAILPKSA</sequence>
<keyword id="KW-0002">3D-structure</keyword>
<keyword id="KW-1283">Bacterial microcompartment</keyword>
<keyword id="KW-0903">Direct protein sequencing</keyword>
<keyword id="KW-1185">Reference proteome</keyword>
<keyword id="KW-0813">Transport</keyword>
<reference key="1">
    <citation type="journal article" date="1999" name="J. Bacteriol.">
        <title>The propanediol utilization (pdu) operon of Salmonella enterica serovar typhimurium LT2 includes genes necessary for formation of polyhedral organelles involved in coenzyme B(12)-dependent 1, 2-propanediol degradation.</title>
        <authorList>
            <person name="Bobik T.A."/>
            <person name="Havemann G.D."/>
            <person name="Busch R.J."/>
            <person name="Williams D.S."/>
            <person name="Aldrich H.C."/>
        </authorList>
    </citation>
    <scope>NUCLEOTIDE SEQUENCE [GENOMIC DNA]</scope>
    <scope>PATHWAY</scope>
    <scope>INDUCTION</scope>
    <source>
        <strain>LT2</strain>
    </source>
</reference>
<reference key="2">
    <citation type="journal article" date="2001" name="Nature">
        <title>Complete genome sequence of Salmonella enterica serovar Typhimurium LT2.</title>
        <authorList>
            <person name="McClelland M."/>
            <person name="Sanderson K.E."/>
            <person name="Spieth J."/>
            <person name="Clifton S.W."/>
            <person name="Latreille P."/>
            <person name="Courtney L."/>
            <person name="Porwollik S."/>
            <person name="Ali J."/>
            <person name="Dante M."/>
            <person name="Du F."/>
            <person name="Hou S."/>
            <person name="Layman D."/>
            <person name="Leonard S."/>
            <person name="Nguyen C."/>
            <person name="Scott K."/>
            <person name="Holmes A."/>
            <person name="Grewal N."/>
            <person name="Mulvaney E."/>
            <person name="Ryan E."/>
            <person name="Sun H."/>
            <person name="Florea L."/>
            <person name="Miller W."/>
            <person name="Stoneking T."/>
            <person name="Nhan M."/>
            <person name="Waterston R."/>
            <person name="Wilson R.K."/>
        </authorList>
    </citation>
    <scope>NUCLEOTIDE SEQUENCE [LARGE SCALE GENOMIC DNA]</scope>
    <source>
        <strain>LT2 / SGSC1412 / ATCC 700720</strain>
    </source>
</reference>
<reference key="3">
    <citation type="journal article" date="2003" name="J. Bacteriol.">
        <title>Protein content of polyhedral organelles involved in coenzyme B12-dependent degradation of 1,2-propanediol in Salmonella enterica serovar Typhimurium LT2.</title>
        <authorList>
            <person name="Havemann G.D."/>
            <person name="Bobik T.A."/>
        </authorList>
    </citation>
    <scope>PROTEIN SEQUENCE OF 1-7</scope>
    <scope>FUNCTION</scope>
    <scope>SUBCELLULAR LOCATION</scope>
    <source>
        <strain>LT2</strain>
    </source>
</reference>
<reference key="4">
    <citation type="journal article" date="1997" name="J. Bacteriol.">
        <title>Genetic characterization of the pdu operon: use of 1,2-propanediol in Salmonella typhimurium.</title>
        <authorList>
            <person name="Walter D."/>
            <person name="Ailion M."/>
            <person name="Roth J."/>
        </authorList>
    </citation>
    <scope>DISRUPTION PHENOTYPE</scope>
    <source>
        <strain>LT2</strain>
    </source>
</reference>
<reference key="5">
    <citation type="journal article" date="2008" name="J. Bacteriol.">
        <title>Microcompartments for B12-dependent 1,2-propanediol degradation provide protection from DNA and cellular damage by a reactive metabolic intermediate.</title>
        <authorList>
            <person name="Sampson E.M."/>
            <person name="Bobik T.A."/>
        </authorList>
    </citation>
    <scope>DISRUPTION PHENOTYPE</scope>
    <source>
        <strain>LT2</strain>
    </source>
</reference>
<reference key="6">
    <citation type="journal article" date="2011" name="J. Bacteriol.">
        <title>Genetic analysis of the protein shell of the microcompartments involved in coenzyme B12-dependent 1,2-propanediol degradation by Salmonella.</title>
        <authorList>
            <person name="Cheng S."/>
            <person name="Sinha S."/>
            <person name="Fan C."/>
            <person name="Liu Y."/>
            <person name="Bobik T.A."/>
        </authorList>
    </citation>
    <scope>FUNCTION</scope>
    <scope>DISRUPTION PHENOTYPE</scope>
    <source>
        <strain>LT2</strain>
    </source>
</reference>
<reference key="7">
    <citation type="journal article" date="2012" name="Proc. Natl. Acad. Sci. U.S.A.">
        <title>Interactions between the termini of lumen enzymes and shell proteins mediate enzyme encapsulation into bacterial microcompartments.</title>
        <authorList>
            <person name="Fan C."/>
            <person name="Cheng S."/>
            <person name="Sinha S."/>
            <person name="Bobik T.A."/>
        </authorList>
    </citation>
    <scope>INTERACTION WITH PDUP</scope>
    <source>
        <strain>LT2</strain>
    </source>
</reference>
<reference key="8">
    <citation type="journal article" date="2013" name="Microbiology">
        <title>A synthetic system for expression of components of a bacterial microcompartment.</title>
        <authorList>
            <person name="Sargent F."/>
            <person name="Davidson F.A."/>
            <person name="Kelly C.L."/>
            <person name="Binny R."/>
            <person name="Christodoulides N."/>
            <person name="Gibson D."/>
            <person name="Johansson E."/>
            <person name="Kozyrska K."/>
            <person name="Lado L.L."/>
            <person name="MacCallum J."/>
            <person name="Montague R."/>
            <person name="Ortmann B."/>
            <person name="Owen R."/>
            <person name="Coulthurst S.J."/>
            <person name="Dupuy L."/>
            <person name="Prescott A.R."/>
            <person name="Palmer T."/>
        </authorList>
    </citation>
    <scope>BIOTECHNOLOGY (ARTIFICIAL BMCS)</scope>
    <source>
        <strain>LT2</strain>
    </source>
</reference>
<reference key="9">
    <citation type="journal article" date="2014" name="J. Mol. Biol.">
        <title>Alanine scanning mutagenesis identifies an asparagine-arginine-lysine triad essential to assembly of the shell of the Pdu microcompartment.</title>
        <authorList>
            <person name="Sinha S."/>
            <person name="Cheng S."/>
            <person name="Sung Y.W."/>
            <person name="McNamara D.E."/>
            <person name="Sawaya M.R."/>
            <person name="Yeates T.O."/>
            <person name="Bobik T.A."/>
        </authorList>
    </citation>
    <scope>FUNCTION</scope>
    <scope>SUBCELLULAR LOCATION</scope>
    <scope>DISRUPTION PHENOTYPE</scope>
    <scope>MUTAGENESIS OF LYS-25</scope>
    <source>
        <strain>LT2</strain>
    </source>
</reference>
<reference key="10">
    <citation type="journal article" date="2015" name="PLoS Comput. Biol.">
        <title>Exploring bacterial organelle interactomes: a model of the protein-protein interaction network in the Pdu microcompartment.</title>
        <authorList>
            <person name="Jorda J."/>
            <person name="Liu Y."/>
            <person name="Bobik T.A."/>
            <person name="Yeates T.O."/>
        </authorList>
    </citation>
    <scope>MODELING OF BMCS</scope>
    <scope>FUNCTION</scope>
</reference>
<reference key="11">
    <citation type="journal article" date="2017" name="PLoS Comput. Biol.">
        <title>A systems-level model reveals that 1,2-Propanediol utilization microcompartments enhance pathway flux through intermediate sequestration.</title>
        <authorList>
            <person name="Jakobson C.M."/>
            <person name="Tullman-Ercek D."/>
            <person name="Slininger M.F."/>
            <person name="Mangan N.M."/>
        </authorList>
    </citation>
    <scope>SYSTEM-MODELING</scope>
    <scope>FUNCTION</scope>
    <source>
        <strain>LT2</strain>
    </source>
</reference>
<reference key="12">
    <citation type="journal article" date="2021" name="J. Mol. Biol.">
        <title>Self-assembling Shell Proteins PduA and PduJ have Essential and Redundant Roles in Bacterial Microcompartment Assembly.</title>
        <authorList>
            <person name="Kennedy N.W."/>
            <person name="Ikonomova S.P."/>
            <person name="Slininger Lee M."/>
            <person name="Raeder H.W."/>
            <person name="Tullman-Ercek D."/>
        </authorList>
    </citation>
    <scope>FUNCTION</scope>
    <scope>DISRUPTION PHENOTYPE</scope>
    <scope>MUTAGENESIS OF LYS-25</scope>
    <source>
        <strain>LT2</strain>
    </source>
</reference>
<reference evidence="19" key="13">
    <citation type="journal article" date="2016" name="Mol. Microbiol.">
        <title>The function of the PduJ microcompartment shell protein is determined by the genomic position of its encoding gene.</title>
        <authorList>
            <person name="Chowdhury C."/>
            <person name="Chun S."/>
            <person name="Sawaya M.R."/>
            <person name="Yeates T.O."/>
            <person name="Bobik T.A."/>
        </authorList>
    </citation>
    <scope>X-RAY CRYSTALLOGRAPHY (1.50 ANGSTROMS) OF 2-91</scope>
    <scope>FUNCTION</scope>
    <scope>SUBUNIT</scope>
    <scope>DISRUPTION PHENOTYPE</scope>
    <scope>MUTAGENESIS OF LYS-25 AND SER-39</scope>
    <source>
        <strain>LT2</strain>
    </source>
</reference>
<name>PDUJ_SALTY</name>
<comment type="function">
    <text evidence="3 5 8 9 10 17">One of the major shell proteins of the bacterial microcompartment (BMC) dedicated to 1,2-propanediol (1,2-PD) degradation. The isolated BMC shell component protein ratio for J:A:B':B:K:T:U is approximately 15:10:7:6:1:1:2 (PubMed:12923081). At least one of PduA or PduJ is required for BMC assembly; it must be encoded as the first gene in the pdu operon (PubMed:27561553, PubMed:33227310). Required for structural integrity of BMCs and to mitigate propionaldehyde toxicity, probably joins facets responsible for BMC closure (PubMed:21239588). Edge residues (particularly Lys-25) are important for function and assembly of the BMC (PubMed:24747050). 80% identical to PduA; although their pore regions appear structurally identical, unlike PduA plays no role in 1,2-PD diffusion into or out of the BMC shell. If pduJ is cloned in the chromosomal position of pduA it is able to complement a pduA deletion; it then has a functional pore as it assumes the transport functions of PduA (PubMed:27561553). Overexpression of this protein leads to aberrant filaments that extend the length of the cell, cross the cleavage furrow and impair division. The filaments form nanotubes with a hollow center (PubMed:33227310). Modeling suggests PduJ is probably the hub for binding multiple enzymes to the interior of the BMC; modeling suggests PduC, PduD, PduG and PduM are targeted to PduJ (Probable).</text>
</comment>
<comment type="function">
    <text evidence="4 18">The 1,2-propanediol (1,2-PD) degradation bacterial microcompartment (BMC) concentrates low levels of 1,2-PD catabolic enzymes, concentrates volatile reaction intermediates thus enhancing pathway flux and keeps the level of toxic, mutagenic propionaldehyde low.</text>
</comment>
<comment type="pathway">
    <text evidence="16">Polyol metabolism; 1,2-propanediol degradation.</text>
</comment>
<comment type="subunit">
    <text evidence="6 9">Homohexamer with a central pore of about 5.7 Angstroms in diameter (PubMed:27561553). Interacts with PduP, which targets PduP to the BMC (PubMed:22927404).</text>
</comment>
<comment type="subcellular location">
    <subcellularLocation>
        <location evidence="3 8">Bacterial microcompartment</location>
    </subcellularLocation>
</comment>
<comment type="induction">
    <text evidence="2">BMC production is induced by growth on 1,2-PD vitamin B12 medium.</text>
</comment>
<comment type="disruption phenotype">
    <text evidence="4 5 8 9 10 11">Cells lacking this gene are defective in aerobic degradation of propanediol (PubMed:9023178). Most cells lack BMCs, 22% have highly elongated internal structures, 20% have amorphous polar bodies. Grows in an interrupted manner on 1,2-PD and vitamin B12; grows for a while then stops, then restarts as if a toxic compound was accumulating and then decreases (PubMed:21239588). Grows faster under limiting vitamin B12 conditions, forms elongated BMCs (PubMed:24747050). A double pduJ-pduK strain grows in an interrupted manner on 1,2-PD and vitamin B12; grows for a while then stops, then restarts as toxic propionaldehyde accumulates and then decreases (PubMed:18296526). Makes elongated BMCs; this phenotype can be rescued by PduA or PduJ, but PduJ encoded on a plasmid cannot rescue a PduA deletion. When pduJ is cloned in the chromosomal position of pduA it substantially rescues the pduA deletion (PubMed:27561553, PubMed:33227310). Single pduA deletion makes BMCs but a double pduA-pduJ deletion does not (PubMed:33227310).</text>
</comment>
<comment type="biotechnology">
    <text evidence="7">Artificial BMCs can be made in E.coli by expressing pduA-pduB/B'-pduT-pduU-pduN-pduJ-pduK (in this order). Enzymes can be targeted to the BMC, and appear to be encapsulated within it.</text>
</comment>
<comment type="miscellaneous">
    <text evidence="2 3">Bacterial microcompartments (BMC) 100-200 nm in cross section are formed during aerobic growth on minimal 1,2-PD-B12 or anaerobic growth on 1,2-PD-tetrathionate medium, but not during aerobic growth on glucose, anerobic growth on glucose or pyruvate-tetrathionate (PubMed:10498708). BMCs can constitute up to 10% of total cell protein (PubMed:12923081).</text>
</comment>
<comment type="similarity">
    <text evidence="1">Belongs to the bacterial microcompartments protein family.</text>
</comment>
<accession>H9L478</accession>
<feature type="chain" id="PRO_0000454252" description="Bacterial microcompartment shell protein PduJ">
    <location>
        <begin position="1"/>
        <end position="91"/>
    </location>
</feature>
<feature type="domain" description="BMC" evidence="1">
    <location>
        <begin position="4"/>
        <end position="88"/>
    </location>
</feature>
<feature type="mutagenesis site" description="Produces amorphous bodies instead of BMCs. Reduces crystallographic problems that result from edge-to-edge aggregation of BMC hexamers. No longer forms filaments upon overexpression, does not restore BMC formation to a double pduA-pduJ deletion." evidence="8 9 10">
    <original>K</original>
    <variation>A</variation>
    <location>
        <position position="25"/>
    </location>
</feature>
<feature type="mutagenesis site" description="Wild-type growth rate, BMCs appear normal, wild-type DDH activity. In the chromosomal position of pduA, less permeable to 1,2-PD, 65% DDH activity, cells grow slower on 1,2-PD." evidence="9">
    <original>S</original>
    <variation>L</variation>
    <location>
        <position position="39"/>
    </location>
</feature>
<feature type="strand" evidence="20">
    <location>
        <begin position="4"/>
        <end position="12"/>
    </location>
</feature>
<feature type="helix" evidence="20">
    <location>
        <begin position="13"/>
        <end position="26"/>
    </location>
</feature>
<feature type="strand" evidence="20">
    <location>
        <begin position="30"/>
        <end position="38"/>
    </location>
</feature>
<feature type="strand" evidence="20">
    <location>
        <begin position="41"/>
        <end position="48"/>
    </location>
</feature>
<feature type="helix" evidence="20">
    <location>
        <begin position="50"/>
        <end position="67"/>
    </location>
</feature>
<feature type="strand" evidence="20">
    <location>
        <begin position="68"/>
        <end position="78"/>
    </location>
</feature>
<feature type="helix" evidence="20">
    <location>
        <begin position="81"/>
        <end position="86"/>
    </location>
</feature>
<protein>
    <recommendedName>
        <fullName evidence="13">Bacterial microcompartment shell protein PduJ</fullName>
    </recommendedName>
    <alternativeName>
        <fullName evidence="15">Bacterial microcompartment protein homohexamer</fullName>
        <shortName evidence="14">BMC-H</shortName>
    </alternativeName>
    <alternativeName>
        <fullName>Propanediol utilization protein PduJ</fullName>
    </alternativeName>
</protein>